<name>TIM16_RAT</name>
<dbReference type="EMBL" id="AY320044">
    <property type="protein sequence ID" value="AAQ86805.1"/>
    <property type="molecule type" value="Genomic_DNA"/>
</dbReference>
<dbReference type="SMR" id="Q6EIX2"/>
<dbReference type="FunCoup" id="Q6EIX2">
    <property type="interactions" value="240"/>
</dbReference>
<dbReference type="STRING" id="10116.ENSRNOP00000006314"/>
<dbReference type="iPTMnet" id="Q6EIX2"/>
<dbReference type="PhosphoSitePlus" id="Q6EIX2"/>
<dbReference type="jPOST" id="Q6EIX2"/>
<dbReference type="AGR" id="RGD:1564452"/>
<dbReference type="RGD" id="1564452">
    <property type="gene designation" value="Magmas-ps1"/>
</dbReference>
<dbReference type="eggNOG" id="KOG3442">
    <property type="taxonomic scope" value="Eukaryota"/>
</dbReference>
<dbReference type="InParanoid" id="Q6EIX2"/>
<dbReference type="PhylomeDB" id="Q6EIX2"/>
<dbReference type="TreeFam" id="TF315134"/>
<dbReference type="PRO" id="PR:Q6EIX2"/>
<dbReference type="Proteomes" id="UP000002494">
    <property type="component" value="Unplaced"/>
</dbReference>
<dbReference type="GO" id="GO:0005744">
    <property type="term" value="C:TIM23 mitochondrial import inner membrane translocase complex"/>
    <property type="evidence" value="ECO:0000318"/>
    <property type="project" value="GO_Central"/>
</dbReference>
<dbReference type="GO" id="GO:0001503">
    <property type="term" value="P:ossification"/>
    <property type="evidence" value="ECO:0000250"/>
    <property type="project" value="UniProtKB"/>
</dbReference>
<dbReference type="GO" id="GO:0030150">
    <property type="term" value="P:protein import into mitochondrial matrix"/>
    <property type="evidence" value="ECO:0000318"/>
    <property type="project" value="GO_Central"/>
</dbReference>
<dbReference type="FunFam" id="1.10.287.110:FF:000006">
    <property type="entry name" value="Import inner membrane translocase subunit TIM16"/>
    <property type="match status" value="1"/>
</dbReference>
<dbReference type="Gene3D" id="1.10.287.110">
    <property type="entry name" value="DnaJ domain"/>
    <property type="match status" value="1"/>
</dbReference>
<dbReference type="InterPro" id="IPR036869">
    <property type="entry name" value="J_dom_sf"/>
</dbReference>
<dbReference type="InterPro" id="IPR005341">
    <property type="entry name" value="Tim16"/>
</dbReference>
<dbReference type="PANTHER" id="PTHR12388">
    <property type="entry name" value="MITOCHONDRIA ASSOCIATED GRANULOCYTE MACROPHAGE CSF SIGNALING MOLECULE"/>
    <property type="match status" value="1"/>
</dbReference>
<dbReference type="PANTHER" id="PTHR12388:SF0">
    <property type="entry name" value="MITOCHONDRIAL IMPORT INNER MEMBRANE TRANSLOCASE SUBUNIT TIM16"/>
    <property type="match status" value="1"/>
</dbReference>
<dbReference type="Pfam" id="PF03656">
    <property type="entry name" value="Pam16"/>
    <property type="match status" value="1"/>
</dbReference>
<reference key="1">
    <citation type="journal article" date="2005" name="In Silico Biol.">
        <title>Magmas gene structure and evolution.</title>
        <authorList>
            <person name="Peng J."/>
            <person name="Huang C.-H."/>
            <person name="Short M.K."/>
            <person name="Jubinsky P.T."/>
        </authorList>
    </citation>
    <scope>NUCLEOTIDE SEQUENCE [GENOMIC DNA]</scope>
</reference>
<sequence>MAKYLTQIIVMGVQVVGRDFAKALRQEFAASQAAADARGHAGHQSAAASNLSGLSLQEAQQILNISKLSPEEVQNYEHLFKVNDKSVGDSFYLQSKVVRAKERLDEELQIQAQEDREKGQMPKT</sequence>
<accession>Q6EIX2</accession>
<keyword id="KW-0472">Membrane</keyword>
<keyword id="KW-0496">Mitochondrion</keyword>
<keyword id="KW-0999">Mitochondrion inner membrane</keyword>
<keyword id="KW-0597">Phosphoprotein</keyword>
<keyword id="KW-0653">Protein transport</keyword>
<keyword id="KW-1185">Reference proteome</keyword>
<keyword id="KW-0811">Translocation</keyword>
<keyword id="KW-0813">Transport</keyword>
<feature type="chain" id="PRO_0000214080" description="Mitochondrial import inner membrane translocase subunit TIM16">
    <location>
        <begin position="1"/>
        <end position="124"/>
    </location>
</feature>
<feature type="region of interest" description="J-like">
    <location>
        <begin position="58"/>
        <end position="109"/>
    </location>
</feature>
<feature type="modified residue" description="Phosphoserine" evidence="2">
    <location>
        <position position="69"/>
    </location>
</feature>
<gene>
    <name type="primary">Magmas-ps1</name>
    <name type="synonym">Magmas</name>
    <name type="synonym">Pam16</name>
    <name type="synonym">Tim16</name>
    <name type="synonym">Timm16</name>
</gene>
<organism>
    <name type="scientific">Rattus norvegicus</name>
    <name type="common">Rat</name>
    <dbReference type="NCBI Taxonomy" id="10116"/>
    <lineage>
        <taxon>Eukaryota</taxon>
        <taxon>Metazoa</taxon>
        <taxon>Chordata</taxon>
        <taxon>Craniata</taxon>
        <taxon>Vertebrata</taxon>
        <taxon>Euteleostomi</taxon>
        <taxon>Mammalia</taxon>
        <taxon>Eutheria</taxon>
        <taxon>Euarchontoglires</taxon>
        <taxon>Glires</taxon>
        <taxon>Rodentia</taxon>
        <taxon>Myomorpha</taxon>
        <taxon>Muroidea</taxon>
        <taxon>Muridae</taxon>
        <taxon>Murinae</taxon>
        <taxon>Rattus</taxon>
    </lineage>
</organism>
<proteinExistence type="inferred from homology"/>
<comment type="function">
    <text evidence="1">Regulates ATP-dependent protein translocation into the mitochondrial matrix. Inhibits DNAJC19 stimulation of HSPA9/Mortalin ATPase activity (By similarity).</text>
</comment>
<comment type="subunit">
    <text evidence="1">Probable component of the PAM complex at least composed of a mitochondrial HSP70 protein, GRPEL1 or GRPEL2, TIMM44, TIMM16/PAM16 and TIMM14/DNAJC19 (By similarity). Interacts with DNAJC19. Directly interacts with DNAJC15; this interaction counteracts DNAJC15-dependent stimulation of HSPA9 ATPase activity (By similarity). Associates with the TIM23 complex (By similarity).</text>
</comment>
<comment type="subcellular location">
    <subcellularLocation>
        <location evidence="1">Mitochondrion inner membrane</location>
        <topology evidence="1">Peripheral membrane protein</topology>
        <orientation evidence="1">Matrix side</orientation>
    </subcellularLocation>
</comment>
<comment type="domain">
    <text evidence="1">The J-like region, although related to the J domain does not have co-chaperone activity.</text>
</comment>
<comment type="similarity">
    <text evidence="3">Belongs to the TIM16/PAM16 family.</text>
</comment>
<protein>
    <recommendedName>
        <fullName>Mitochondrial import inner membrane translocase subunit TIM16</fullName>
    </recommendedName>
    <alternativeName>
        <fullName>Mitochondria-associated granulocyte macrophage CSF-signaling molecule</fullName>
    </alternativeName>
    <alternativeName>
        <fullName>Presequence translocated-associated motor subunit PAM16</fullName>
    </alternativeName>
</protein>
<evidence type="ECO:0000250" key="1"/>
<evidence type="ECO:0000250" key="2">
    <source>
        <dbReference type="UniProtKB" id="Q9CQV1"/>
    </source>
</evidence>
<evidence type="ECO:0000305" key="3"/>